<name>MURE_HAEIE</name>
<accession>A5UCX3</accession>
<dbReference type="EC" id="6.3.2.13" evidence="1"/>
<dbReference type="EMBL" id="CP000671">
    <property type="protein sequence ID" value="ABQ98624.1"/>
    <property type="molecule type" value="Genomic_DNA"/>
</dbReference>
<dbReference type="SMR" id="A5UCX3"/>
<dbReference type="KEGG" id="hip:CGSHiEE_06385"/>
<dbReference type="HOGENOM" id="CLU_022291_3_2_6"/>
<dbReference type="UniPathway" id="UPA00219"/>
<dbReference type="GO" id="GO:0005737">
    <property type="term" value="C:cytoplasm"/>
    <property type="evidence" value="ECO:0007669"/>
    <property type="project" value="UniProtKB-SubCell"/>
</dbReference>
<dbReference type="GO" id="GO:0005524">
    <property type="term" value="F:ATP binding"/>
    <property type="evidence" value="ECO:0007669"/>
    <property type="project" value="UniProtKB-UniRule"/>
</dbReference>
<dbReference type="GO" id="GO:0000287">
    <property type="term" value="F:magnesium ion binding"/>
    <property type="evidence" value="ECO:0007669"/>
    <property type="project" value="UniProtKB-UniRule"/>
</dbReference>
<dbReference type="GO" id="GO:0008765">
    <property type="term" value="F:UDP-N-acetylmuramoylalanyl-D-glutamate-2,6-diaminopimelate ligase activity"/>
    <property type="evidence" value="ECO:0007669"/>
    <property type="project" value="UniProtKB-UniRule"/>
</dbReference>
<dbReference type="GO" id="GO:0051301">
    <property type="term" value="P:cell division"/>
    <property type="evidence" value="ECO:0007669"/>
    <property type="project" value="UniProtKB-KW"/>
</dbReference>
<dbReference type="GO" id="GO:0071555">
    <property type="term" value="P:cell wall organization"/>
    <property type="evidence" value="ECO:0007669"/>
    <property type="project" value="UniProtKB-KW"/>
</dbReference>
<dbReference type="GO" id="GO:0009252">
    <property type="term" value="P:peptidoglycan biosynthetic process"/>
    <property type="evidence" value="ECO:0007669"/>
    <property type="project" value="UniProtKB-UniRule"/>
</dbReference>
<dbReference type="GO" id="GO:0008360">
    <property type="term" value="P:regulation of cell shape"/>
    <property type="evidence" value="ECO:0007669"/>
    <property type="project" value="UniProtKB-KW"/>
</dbReference>
<dbReference type="FunFam" id="3.90.190.20:FF:000006">
    <property type="entry name" value="UDP-N-acetylmuramoyl-L-alanyl-D-glutamate--2,6-diaminopimelate ligase"/>
    <property type="match status" value="1"/>
</dbReference>
<dbReference type="Gene3D" id="3.90.190.20">
    <property type="entry name" value="Mur ligase, C-terminal domain"/>
    <property type="match status" value="1"/>
</dbReference>
<dbReference type="Gene3D" id="3.40.1190.10">
    <property type="entry name" value="Mur-like, catalytic domain"/>
    <property type="match status" value="1"/>
</dbReference>
<dbReference type="Gene3D" id="3.40.1390.10">
    <property type="entry name" value="MurE/MurF, N-terminal domain"/>
    <property type="match status" value="1"/>
</dbReference>
<dbReference type="HAMAP" id="MF_00208">
    <property type="entry name" value="MurE"/>
    <property type="match status" value="1"/>
</dbReference>
<dbReference type="InterPro" id="IPR036565">
    <property type="entry name" value="Mur-like_cat_sf"/>
</dbReference>
<dbReference type="InterPro" id="IPR004101">
    <property type="entry name" value="Mur_ligase_C"/>
</dbReference>
<dbReference type="InterPro" id="IPR036615">
    <property type="entry name" value="Mur_ligase_C_dom_sf"/>
</dbReference>
<dbReference type="InterPro" id="IPR013221">
    <property type="entry name" value="Mur_ligase_cen"/>
</dbReference>
<dbReference type="InterPro" id="IPR000713">
    <property type="entry name" value="Mur_ligase_N"/>
</dbReference>
<dbReference type="InterPro" id="IPR035911">
    <property type="entry name" value="MurE/MurF_N"/>
</dbReference>
<dbReference type="InterPro" id="IPR005761">
    <property type="entry name" value="UDP-N-AcMur-Glu-dNH2Pim_ligase"/>
</dbReference>
<dbReference type="NCBIfam" id="TIGR01085">
    <property type="entry name" value="murE"/>
    <property type="match status" value="1"/>
</dbReference>
<dbReference type="NCBIfam" id="NF001123">
    <property type="entry name" value="PRK00139.1-1"/>
    <property type="match status" value="1"/>
</dbReference>
<dbReference type="NCBIfam" id="NF001124">
    <property type="entry name" value="PRK00139.1-2"/>
    <property type="match status" value="1"/>
</dbReference>
<dbReference type="NCBIfam" id="NF001126">
    <property type="entry name" value="PRK00139.1-4"/>
    <property type="match status" value="1"/>
</dbReference>
<dbReference type="PANTHER" id="PTHR23135">
    <property type="entry name" value="MUR LIGASE FAMILY MEMBER"/>
    <property type="match status" value="1"/>
</dbReference>
<dbReference type="PANTHER" id="PTHR23135:SF4">
    <property type="entry name" value="UDP-N-ACETYLMURAMOYL-L-ALANYL-D-GLUTAMATE--2,6-DIAMINOPIMELATE LIGASE MURE HOMOLOG, CHLOROPLASTIC"/>
    <property type="match status" value="1"/>
</dbReference>
<dbReference type="Pfam" id="PF01225">
    <property type="entry name" value="Mur_ligase"/>
    <property type="match status" value="1"/>
</dbReference>
<dbReference type="Pfam" id="PF02875">
    <property type="entry name" value="Mur_ligase_C"/>
    <property type="match status" value="1"/>
</dbReference>
<dbReference type="Pfam" id="PF08245">
    <property type="entry name" value="Mur_ligase_M"/>
    <property type="match status" value="1"/>
</dbReference>
<dbReference type="SUPFAM" id="SSF53623">
    <property type="entry name" value="MurD-like peptide ligases, catalytic domain"/>
    <property type="match status" value="1"/>
</dbReference>
<dbReference type="SUPFAM" id="SSF53244">
    <property type="entry name" value="MurD-like peptide ligases, peptide-binding domain"/>
    <property type="match status" value="1"/>
</dbReference>
<dbReference type="SUPFAM" id="SSF63418">
    <property type="entry name" value="MurE/MurF N-terminal domain"/>
    <property type="match status" value="1"/>
</dbReference>
<keyword id="KW-0067">ATP-binding</keyword>
<keyword id="KW-0131">Cell cycle</keyword>
<keyword id="KW-0132">Cell division</keyword>
<keyword id="KW-0133">Cell shape</keyword>
<keyword id="KW-0961">Cell wall biogenesis/degradation</keyword>
<keyword id="KW-0963">Cytoplasm</keyword>
<keyword id="KW-0436">Ligase</keyword>
<keyword id="KW-0460">Magnesium</keyword>
<keyword id="KW-0547">Nucleotide-binding</keyword>
<keyword id="KW-0573">Peptidoglycan synthesis</keyword>
<reference key="1">
    <citation type="journal article" date="2007" name="Genome Biol.">
        <title>Characterization and modeling of the Haemophilus influenzae core and supragenomes based on the complete genomic sequences of Rd and 12 clinical nontypeable strains.</title>
        <authorList>
            <person name="Hogg J.S."/>
            <person name="Hu F.Z."/>
            <person name="Janto B."/>
            <person name="Boissy R."/>
            <person name="Hayes J."/>
            <person name="Keefe R."/>
            <person name="Post J.C."/>
            <person name="Ehrlich G.D."/>
        </authorList>
    </citation>
    <scope>NUCLEOTIDE SEQUENCE [LARGE SCALE GENOMIC DNA]</scope>
    <source>
        <strain>PittEE</strain>
    </source>
</reference>
<proteinExistence type="inferred from homology"/>
<organism>
    <name type="scientific">Haemophilus influenzae (strain PittEE)</name>
    <dbReference type="NCBI Taxonomy" id="374930"/>
    <lineage>
        <taxon>Bacteria</taxon>
        <taxon>Pseudomonadati</taxon>
        <taxon>Pseudomonadota</taxon>
        <taxon>Gammaproteobacteria</taxon>
        <taxon>Pasteurellales</taxon>
        <taxon>Pasteurellaceae</taxon>
        <taxon>Haemophilus</taxon>
    </lineage>
</organism>
<protein>
    <recommendedName>
        <fullName evidence="1">UDP-N-acetylmuramoyl-L-alanyl-D-glutamate--2,6-diaminopimelate ligase</fullName>
        <ecNumber evidence="1">6.3.2.13</ecNumber>
    </recommendedName>
    <alternativeName>
        <fullName evidence="1">Meso-A2pm-adding enzyme</fullName>
    </alternativeName>
    <alternativeName>
        <fullName evidence="1">Meso-diaminopimelate-adding enzyme</fullName>
    </alternativeName>
    <alternativeName>
        <fullName evidence="1">UDP-MurNAc-L-Ala-D-Glu:meso-diaminopimelate ligase</fullName>
    </alternativeName>
    <alternativeName>
        <fullName evidence="1">UDP-MurNAc-tripeptide synthetase</fullName>
    </alternativeName>
    <alternativeName>
        <fullName evidence="1">UDP-N-acetylmuramyl-tripeptide synthetase</fullName>
    </alternativeName>
</protein>
<comment type="function">
    <text evidence="1">Catalyzes the addition of meso-diaminopimelic acid to the nucleotide precursor UDP-N-acetylmuramoyl-L-alanyl-D-glutamate (UMAG) in the biosynthesis of bacterial cell-wall peptidoglycan.</text>
</comment>
<comment type="catalytic activity">
    <reaction evidence="1">
        <text>UDP-N-acetyl-alpha-D-muramoyl-L-alanyl-D-glutamate + meso-2,6-diaminopimelate + ATP = UDP-N-acetyl-alpha-D-muramoyl-L-alanyl-gamma-D-glutamyl-meso-2,6-diaminopimelate + ADP + phosphate + H(+)</text>
        <dbReference type="Rhea" id="RHEA:23676"/>
        <dbReference type="ChEBI" id="CHEBI:15378"/>
        <dbReference type="ChEBI" id="CHEBI:30616"/>
        <dbReference type="ChEBI" id="CHEBI:43474"/>
        <dbReference type="ChEBI" id="CHEBI:57791"/>
        <dbReference type="ChEBI" id="CHEBI:83900"/>
        <dbReference type="ChEBI" id="CHEBI:83905"/>
        <dbReference type="ChEBI" id="CHEBI:456216"/>
        <dbReference type="EC" id="6.3.2.13"/>
    </reaction>
</comment>
<comment type="cofactor">
    <cofactor evidence="1">
        <name>Mg(2+)</name>
        <dbReference type="ChEBI" id="CHEBI:18420"/>
    </cofactor>
</comment>
<comment type="pathway">
    <text evidence="1">Cell wall biogenesis; peptidoglycan biosynthesis.</text>
</comment>
<comment type="subcellular location">
    <subcellularLocation>
        <location evidence="1">Cytoplasm</location>
    </subcellularLocation>
</comment>
<comment type="PTM">
    <text evidence="1">Carboxylation is probably crucial for Mg(2+) binding and, consequently, for the gamma-phosphate positioning of ATP.</text>
</comment>
<comment type="similarity">
    <text evidence="1">Belongs to the MurCDEF family. MurE subfamily.</text>
</comment>
<evidence type="ECO:0000255" key="1">
    <source>
        <dbReference type="HAMAP-Rule" id="MF_00208"/>
    </source>
</evidence>
<sequence>MKKLTALFNLPELKNDIELHNMVLDSRKVKAGDLFVAIKGHQVDGNQFIDSALHSGASAVVSETELSSEHLTVAFIGNVPVVKYHQLARHLSSLADVFYDSPSKNLTLVGVTGTNGKTTISQLLAQWAELLGLRAAVMGTIGNGLFGQIVEAKNTTGSAVEIQSSLSTFKHAGADFTSIEVSSHGLAQHRVEALHFKAAIFTNLTRDHLDYHQSMENYAAAKKRLFTELDTQIKVINADDEIGYQWLTKLPDAIAVSMNADFKVGSHQWMKAINIHYHFKGADITFESSWGNGVLHSPLIGAFNVSNLLLVMTTLLSFGYPLENLLATAKSLKGVCGRMEMIQYPNKPTVIVDYAHTPDALEKALIAAREHCQGELWCIFGCGGDRDRGKRPLMAQVAEQFAEKIIVTKDNPRTEPQSQIEADIVAGFKNMEKVGIIPDRAQAIQFAIESAVENDVILIAGKGHEHYQIIGSEVVHFSDQEIALDFLK</sequence>
<feature type="chain" id="PRO_1000012357" description="UDP-N-acetylmuramoyl-L-alanyl-D-glutamate--2,6-diaminopimelate ligase">
    <location>
        <begin position="1"/>
        <end position="488"/>
    </location>
</feature>
<feature type="short sequence motif" description="Meso-diaminopimelate recognition motif">
    <location>
        <begin position="410"/>
        <end position="413"/>
    </location>
</feature>
<feature type="binding site" evidence="1">
    <location>
        <position position="24"/>
    </location>
    <ligand>
        <name>UDP-N-acetyl-alpha-D-muramoyl-L-alanyl-D-glutamate</name>
        <dbReference type="ChEBI" id="CHEBI:83900"/>
    </ligand>
</feature>
<feature type="binding site" evidence="1">
    <location>
        <position position="26"/>
    </location>
    <ligand>
        <name>UDP-N-acetyl-alpha-D-muramoyl-L-alanyl-D-glutamate</name>
        <dbReference type="ChEBI" id="CHEBI:83900"/>
    </ligand>
</feature>
<feature type="binding site" evidence="1">
    <location>
        <begin position="41"/>
        <end position="43"/>
    </location>
    <ligand>
        <name>UDP-N-acetyl-alpha-D-muramoyl-L-alanyl-D-glutamate</name>
        <dbReference type="ChEBI" id="CHEBI:83900"/>
    </ligand>
</feature>
<feature type="binding site" evidence="1">
    <location>
        <begin position="113"/>
        <end position="119"/>
    </location>
    <ligand>
        <name>ATP</name>
        <dbReference type="ChEBI" id="CHEBI:30616"/>
    </ligand>
</feature>
<feature type="binding site" evidence="1">
    <location>
        <position position="154"/>
    </location>
    <ligand>
        <name>UDP-N-acetyl-alpha-D-muramoyl-L-alanyl-D-glutamate</name>
        <dbReference type="ChEBI" id="CHEBI:83900"/>
    </ligand>
</feature>
<feature type="binding site" evidence="1">
    <location>
        <begin position="155"/>
        <end position="156"/>
    </location>
    <ligand>
        <name>UDP-N-acetyl-alpha-D-muramoyl-L-alanyl-D-glutamate</name>
        <dbReference type="ChEBI" id="CHEBI:83900"/>
    </ligand>
</feature>
<feature type="binding site" evidence="1">
    <location>
        <position position="182"/>
    </location>
    <ligand>
        <name>UDP-N-acetyl-alpha-D-muramoyl-L-alanyl-D-glutamate</name>
        <dbReference type="ChEBI" id="CHEBI:83900"/>
    </ligand>
</feature>
<feature type="binding site" evidence="1">
    <location>
        <position position="188"/>
    </location>
    <ligand>
        <name>UDP-N-acetyl-alpha-D-muramoyl-L-alanyl-D-glutamate</name>
        <dbReference type="ChEBI" id="CHEBI:83900"/>
    </ligand>
</feature>
<feature type="binding site" evidence="1">
    <location>
        <position position="190"/>
    </location>
    <ligand>
        <name>UDP-N-acetyl-alpha-D-muramoyl-L-alanyl-D-glutamate</name>
        <dbReference type="ChEBI" id="CHEBI:83900"/>
    </ligand>
</feature>
<feature type="binding site" evidence="1">
    <location>
        <position position="386"/>
    </location>
    <ligand>
        <name>meso-2,6-diaminopimelate</name>
        <dbReference type="ChEBI" id="CHEBI:57791"/>
    </ligand>
</feature>
<feature type="binding site" evidence="1">
    <location>
        <begin position="410"/>
        <end position="413"/>
    </location>
    <ligand>
        <name>meso-2,6-diaminopimelate</name>
        <dbReference type="ChEBI" id="CHEBI:57791"/>
    </ligand>
</feature>
<feature type="binding site" evidence="1">
    <location>
        <position position="461"/>
    </location>
    <ligand>
        <name>meso-2,6-diaminopimelate</name>
        <dbReference type="ChEBI" id="CHEBI:57791"/>
    </ligand>
</feature>
<feature type="binding site" evidence="1">
    <location>
        <position position="465"/>
    </location>
    <ligand>
        <name>meso-2,6-diaminopimelate</name>
        <dbReference type="ChEBI" id="CHEBI:57791"/>
    </ligand>
</feature>
<feature type="modified residue" description="N6-carboxylysine" evidence="1">
    <location>
        <position position="222"/>
    </location>
</feature>
<gene>
    <name evidence="1" type="primary">murE</name>
    <name type="ordered locus">CGSHiEE_06385</name>
</gene>